<sequence>MRGYHGDRGSHPRPARFADQQHMDVGPAARAPYLLGSREAFSTEPRFCAPRAGLGHISPEGPLSLSEGPSVGPEGGPAGAGVGGGSSTFPRMYPGQGPFDTCEDCVGHPQGKGAPRLPPTLLDQFEKQLPVQQDGFHTLPYQRGPAGAGPGPAPGTGTAPEPRSESPSRIRHLVHSVQKLFAKSHSLEAPGKRDYNGPKAEGRGGSGGDSYPGPGSGGPHTSHHHHHHHHHHHHQSRHGKRSKSKDRKGDGRHQAKSTGWWSSDDNLDSDSGFLAGGRPPGEPGGPFCLEGPDGSYRDLSFKGRSGGSEGRCLACTGMSMSLDGQSVKRSAWHTMMVSQGRDGYPGAGPGKGLLGPETKAKARTYHYLQVPQDDWGGYPTGGKDGEIPCRRMRSGSYIKAMGDEESGDSDGSPKTSPKAVARRFTTRRSSSVDQARINCCVPPRIHPRSSIPGYSRSLTTGQLSDELNQQLEAVCGSVFGELESQAVDALDLPGCFRMRSHSYLRAIQAGCSQDDDCLPLLATPAAVSGRPGSSFNFRKAPPPIPPGSQAPPRISITAQSSTDSAHESFTAAEGPARRCSSADGLDGPAMGARTLELAPVPPRASPKPPTLIIKTIPGREELRSLARQRKWRPSIGVQVETISDSDTENRSRREFHSIGVQVEEDKRRARFKRSNSVTAGVQADLELEGLAGLATVATEDKALQFGRSFQRHASEPQPGPRAPTYSVFRTVHTQGQWAYREGYPLPYEPPATDGSPGPAPAPTPGPGAGRRDSWIERGSRSLPDSGRASPCPRDGEWFIKMLRAEVEKLEHWCQQMEREAEDYELPEEILEKIRSAVGSTQLLLSQKVQQFFRLCQQSMDPTAFPVPTFQDLAGFWDLLQLSIEDVTLKFLELQQLKANSWKLLEPKEEKKVPPPIPKKPLRGRGVPVKERSLDSVDRQRQEARKRLLAAKRAASFRHSSATESADSIEIYIPEAQTRL</sequence>
<dbReference type="EMBL" id="AC114490">
    <property type="status" value="NOT_ANNOTATED_CDS"/>
    <property type="molecule type" value="Genomic_DNA"/>
</dbReference>
<dbReference type="EMBL" id="AL122010">
    <property type="status" value="NOT_ANNOTATED_CDS"/>
    <property type="molecule type" value="Genomic_DNA"/>
</dbReference>
<dbReference type="EMBL" id="AF131778">
    <property type="protein sequence ID" value="AAD20042.1"/>
    <property type="status" value="ALT_FRAME"/>
    <property type="molecule type" value="mRNA"/>
</dbReference>
<dbReference type="CCDS" id="CCDS30670.1"/>
<dbReference type="RefSeq" id="NP_001073887.1">
    <property type="nucleotide sequence ID" value="NM_001080418.3"/>
</dbReference>
<dbReference type="RefSeq" id="XP_011540181.1">
    <property type="nucleotide sequence ID" value="XM_011541879.3"/>
</dbReference>
<dbReference type="RefSeq" id="XP_047282587.1">
    <property type="nucleotide sequence ID" value="XM_047426631.1"/>
</dbReference>
<dbReference type="SMR" id="O95886"/>
<dbReference type="BioGRID" id="121839">
    <property type="interactions" value="23"/>
</dbReference>
<dbReference type="FunCoup" id="O95886">
    <property type="interactions" value="86"/>
</dbReference>
<dbReference type="IntAct" id="O95886">
    <property type="interactions" value="27"/>
</dbReference>
<dbReference type="MINT" id="O95886"/>
<dbReference type="STRING" id="9606.ENSP00000362444"/>
<dbReference type="GlyGen" id="O95886">
    <property type="glycosylation" value="2 sites"/>
</dbReference>
<dbReference type="iPTMnet" id="O95886"/>
<dbReference type="PhosphoSitePlus" id="O95886"/>
<dbReference type="SwissPalm" id="O95886"/>
<dbReference type="BioMuta" id="DLGAP3"/>
<dbReference type="jPOST" id="O95886"/>
<dbReference type="MassIVE" id="O95886"/>
<dbReference type="PaxDb" id="9606-ENSP00000362444"/>
<dbReference type="PeptideAtlas" id="O95886"/>
<dbReference type="ProteomicsDB" id="51118"/>
<dbReference type="Antibodypedia" id="17231">
    <property type="antibodies" value="128 antibodies from 29 providers"/>
</dbReference>
<dbReference type="DNASU" id="58512"/>
<dbReference type="Ensembl" id="ENST00000235180.4">
    <property type="protein sequence ID" value="ENSP00000235180.4"/>
    <property type="gene ID" value="ENSG00000116544.12"/>
</dbReference>
<dbReference type="Ensembl" id="ENST00000373347.6">
    <property type="protein sequence ID" value="ENSP00000362444.1"/>
    <property type="gene ID" value="ENSG00000116544.12"/>
</dbReference>
<dbReference type="GeneID" id="58512"/>
<dbReference type="KEGG" id="hsa:58512"/>
<dbReference type="MANE-Select" id="ENST00000373347.6">
    <property type="protein sequence ID" value="ENSP00000362444.1"/>
    <property type="RefSeq nucleotide sequence ID" value="NM_001080418.3"/>
    <property type="RefSeq protein sequence ID" value="NP_001073887.1"/>
</dbReference>
<dbReference type="UCSC" id="uc001byc.3">
    <property type="organism name" value="human"/>
</dbReference>
<dbReference type="AGR" id="HGNC:30368"/>
<dbReference type="CTD" id="58512"/>
<dbReference type="DisGeNET" id="58512"/>
<dbReference type="GeneCards" id="DLGAP3"/>
<dbReference type="HGNC" id="HGNC:30368">
    <property type="gene designation" value="DLGAP3"/>
</dbReference>
<dbReference type="HPA" id="ENSG00000116544">
    <property type="expression patterns" value="Tissue enriched (brain)"/>
</dbReference>
<dbReference type="MIM" id="611413">
    <property type="type" value="gene"/>
</dbReference>
<dbReference type="neXtProt" id="NX_O95886"/>
<dbReference type="OpenTargets" id="ENSG00000116544"/>
<dbReference type="PharmGKB" id="PA134923893"/>
<dbReference type="VEuPathDB" id="HostDB:ENSG00000116544"/>
<dbReference type="eggNOG" id="KOG3971">
    <property type="taxonomic scope" value="Eukaryota"/>
</dbReference>
<dbReference type="GeneTree" id="ENSGT00940000159513"/>
<dbReference type="HOGENOM" id="CLU_010880_0_0_1"/>
<dbReference type="InParanoid" id="O95886"/>
<dbReference type="OMA" id="DCVGHPP"/>
<dbReference type="OrthoDB" id="10036956at2759"/>
<dbReference type="PAN-GO" id="O95886">
    <property type="GO annotations" value="4 GO annotations based on evolutionary models"/>
</dbReference>
<dbReference type="PhylomeDB" id="O95886"/>
<dbReference type="TreeFam" id="TF321382"/>
<dbReference type="PathwayCommons" id="O95886"/>
<dbReference type="Reactome" id="R-HSA-6794361">
    <property type="pathway name" value="Neurexins and neuroligins"/>
</dbReference>
<dbReference type="SignaLink" id="O95886"/>
<dbReference type="SIGNOR" id="O95886"/>
<dbReference type="BioGRID-ORCS" id="58512">
    <property type="hits" value="16 hits in 1153 CRISPR screens"/>
</dbReference>
<dbReference type="CD-CODE" id="FB4E32DD">
    <property type="entry name" value="Presynaptic clusters and postsynaptic densities"/>
</dbReference>
<dbReference type="GenomeRNAi" id="58512"/>
<dbReference type="Pharos" id="O95886">
    <property type="development level" value="Tbio"/>
</dbReference>
<dbReference type="PRO" id="PR:O95886"/>
<dbReference type="Proteomes" id="UP000005640">
    <property type="component" value="Chromosome 1"/>
</dbReference>
<dbReference type="RNAct" id="O95886">
    <property type="molecule type" value="protein"/>
</dbReference>
<dbReference type="Bgee" id="ENSG00000116544">
    <property type="expression patterns" value="Expressed in right frontal lobe and 104 other cell types or tissues"/>
</dbReference>
<dbReference type="GO" id="GO:0098981">
    <property type="term" value="C:cholinergic synapse"/>
    <property type="evidence" value="ECO:0007669"/>
    <property type="project" value="Ensembl"/>
</dbReference>
<dbReference type="GO" id="GO:0098978">
    <property type="term" value="C:glutamatergic synapse"/>
    <property type="evidence" value="ECO:0000318"/>
    <property type="project" value="GO_Central"/>
</dbReference>
<dbReference type="GO" id="GO:0031594">
    <property type="term" value="C:neuromuscular junction"/>
    <property type="evidence" value="ECO:0007669"/>
    <property type="project" value="Ensembl"/>
</dbReference>
<dbReference type="GO" id="GO:0005886">
    <property type="term" value="C:plasma membrane"/>
    <property type="evidence" value="ECO:0000304"/>
    <property type="project" value="Reactome"/>
</dbReference>
<dbReference type="GO" id="GO:0014069">
    <property type="term" value="C:postsynaptic density"/>
    <property type="evidence" value="ECO:0007669"/>
    <property type="project" value="UniProtKB-SubCell"/>
</dbReference>
<dbReference type="GO" id="GO:0099572">
    <property type="term" value="C:postsynaptic specialization"/>
    <property type="evidence" value="ECO:0000318"/>
    <property type="project" value="GO_Central"/>
</dbReference>
<dbReference type="GO" id="GO:0001540">
    <property type="term" value="F:amyloid-beta binding"/>
    <property type="evidence" value="ECO:0007669"/>
    <property type="project" value="Ensembl"/>
</dbReference>
<dbReference type="GO" id="GO:0060090">
    <property type="term" value="F:molecular adaptor activity"/>
    <property type="evidence" value="ECO:0000318"/>
    <property type="project" value="GO_Central"/>
</dbReference>
<dbReference type="GO" id="GO:0099010">
    <property type="term" value="P:modification of postsynaptic structure"/>
    <property type="evidence" value="ECO:0007669"/>
    <property type="project" value="Ensembl"/>
</dbReference>
<dbReference type="GO" id="GO:0050804">
    <property type="term" value="P:modulation of chemical synaptic transmission"/>
    <property type="evidence" value="ECO:0000318"/>
    <property type="project" value="GO_Central"/>
</dbReference>
<dbReference type="GO" id="GO:0023052">
    <property type="term" value="P:signaling"/>
    <property type="evidence" value="ECO:0007669"/>
    <property type="project" value="InterPro"/>
</dbReference>
<dbReference type="InterPro" id="IPR005026">
    <property type="entry name" value="SAPAP"/>
</dbReference>
<dbReference type="PANTHER" id="PTHR12353:SF4">
    <property type="entry name" value="DISKS LARGE-ASSOCIATED PROTEIN 3"/>
    <property type="match status" value="1"/>
</dbReference>
<dbReference type="PANTHER" id="PTHR12353">
    <property type="entry name" value="DISKS LARGE-ASSOCIATED PROTEIN DAP SAP90/PSD-95-ASSOCIATED PROTEIN"/>
    <property type="match status" value="1"/>
</dbReference>
<dbReference type="Pfam" id="PF03359">
    <property type="entry name" value="GKAP"/>
    <property type="match status" value="1"/>
</dbReference>
<accession>O95886</accession>
<accession>Q5TDD5</accession>
<accession>Q9H3X7</accession>
<evidence type="ECO:0000250" key="1"/>
<evidence type="ECO:0000250" key="2">
    <source>
        <dbReference type="UniProtKB" id="P97838"/>
    </source>
</evidence>
<evidence type="ECO:0000250" key="3">
    <source>
        <dbReference type="UniProtKB" id="Q6PFD5"/>
    </source>
</evidence>
<evidence type="ECO:0000256" key="4">
    <source>
        <dbReference type="SAM" id="MobiDB-lite"/>
    </source>
</evidence>
<evidence type="ECO:0000269" key="5">
    <source>
    </source>
</evidence>
<evidence type="ECO:0000305" key="6"/>
<reference key="1">
    <citation type="journal article" date="2006" name="Nature">
        <title>The DNA sequence and biological annotation of human chromosome 1.</title>
        <authorList>
            <person name="Gregory S.G."/>
            <person name="Barlow K.F."/>
            <person name="McLay K.E."/>
            <person name="Kaul R."/>
            <person name="Swarbreck D."/>
            <person name="Dunham A."/>
            <person name="Scott C.E."/>
            <person name="Howe K.L."/>
            <person name="Woodfine K."/>
            <person name="Spencer C.C.A."/>
            <person name="Jones M.C."/>
            <person name="Gillson C."/>
            <person name="Searle S."/>
            <person name="Zhou Y."/>
            <person name="Kokocinski F."/>
            <person name="McDonald L."/>
            <person name="Evans R."/>
            <person name="Phillips K."/>
            <person name="Atkinson A."/>
            <person name="Cooper R."/>
            <person name="Jones C."/>
            <person name="Hall R.E."/>
            <person name="Andrews T.D."/>
            <person name="Lloyd C."/>
            <person name="Ainscough R."/>
            <person name="Almeida J.P."/>
            <person name="Ambrose K.D."/>
            <person name="Anderson F."/>
            <person name="Andrew R.W."/>
            <person name="Ashwell R.I.S."/>
            <person name="Aubin K."/>
            <person name="Babbage A.K."/>
            <person name="Bagguley C.L."/>
            <person name="Bailey J."/>
            <person name="Beasley H."/>
            <person name="Bethel G."/>
            <person name="Bird C.P."/>
            <person name="Bray-Allen S."/>
            <person name="Brown J.Y."/>
            <person name="Brown A.J."/>
            <person name="Buckley D."/>
            <person name="Burton J."/>
            <person name="Bye J."/>
            <person name="Carder C."/>
            <person name="Chapman J.C."/>
            <person name="Clark S.Y."/>
            <person name="Clarke G."/>
            <person name="Clee C."/>
            <person name="Cobley V."/>
            <person name="Collier R.E."/>
            <person name="Corby N."/>
            <person name="Coville G.J."/>
            <person name="Davies J."/>
            <person name="Deadman R."/>
            <person name="Dunn M."/>
            <person name="Earthrowl M."/>
            <person name="Ellington A.G."/>
            <person name="Errington H."/>
            <person name="Frankish A."/>
            <person name="Frankland J."/>
            <person name="French L."/>
            <person name="Garner P."/>
            <person name="Garnett J."/>
            <person name="Gay L."/>
            <person name="Ghori M.R.J."/>
            <person name="Gibson R."/>
            <person name="Gilby L.M."/>
            <person name="Gillett W."/>
            <person name="Glithero R.J."/>
            <person name="Grafham D.V."/>
            <person name="Griffiths C."/>
            <person name="Griffiths-Jones S."/>
            <person name="Grocock R."/>
            <person name="Hammond S."/>
            <person name="Harrison E.S.I."/>
            <person name="Hart E."/>
            <person name="Haugen E."/>
            <person name="Heath P.D."/>
            <person name="Holmes S."/>
            <person name="Holt K."/>
            <person name="Howden P.J."/>
            <person name="Hunt A.R."/>
            <person name="Hunt S.E."/>
            <person name="Hunter G."/>
            <person name="Isherwood J."/>
            <person name="James R."/>
            <person name="Johnson C."/>
            <person name="Johnson D."/>
            <person name="Joy A."/>
            <person name="Kay M."/>
            <person name="Kershaw J.K."/>
            <person name="Kibukawa M."/>
            <person name="Kimberley A.M."/>
            <person name="King A."/>
            <person name="Knights A.J."/>
            <person name="Lad H."/>
            <person name="Laird G."/>
            <person name="Lawlor S."/>
            <person name="Leongamornlert D.A."/>
            <person name="Lloyd D.M."/>
            <person name="Loveland J."/>
            <person name="Lovell J."/>
            <person name="Lush M.J."/>
            <person name="Lyne R."/>
            <person name="Martin S."/>
            <person name="Mashreghi-Mohammadi M."/>
            <person name="Matthews L."/>
            <person name="Matthews N.S.W."/>
            <person name="McLaren S."/>
            <person name="Milne S."/>
            <person name="Mistry S."/>
            <person name="Moore M.J.F."/>
            <person name="Nickerson T."/>
            <person name="O'Dell C.N."/>
            <person name="Oliver K."/>
            <person name="Palmeiri A."/>
            <person name="Palmer S.A."/>
            <person name="Parker A."/>
            <person name="Patel D."/>
            <person name="Pearce A.V."/>
            <person name="Peck A.I."/>
            <person name="Pelan S."/>
            <person name="Phelps K."/>
            <person name="Phillimore B.J."/>
            <person name="Plumb R."/>
            <person name="Rajan J."/>
            <person name="Raymond C."/>
            <person name="Rouse G."/>
            <person name="Saenphimmachak C."/>
            <person name="Sehra H.K."/>
            <person name="Sheridan E."/>
            <person name="Shownkeen R."/>
            <person name="Sims S."/>
            <person name="Skuce C.D."/>
            <person name="Smith M."/>
            <person name="Steward C."/>
            <person name="Subramanian S."/>
            <person name="Sycamore N."/>
            <person name="Tracey A."/>
            <person name="Tromans A."/>
            <person name="Van Helmond Z."/>
            <person name="Wall M."/>
            <person name="Wallis J.M."/>
            <person name="White S."/>
            <person name="Whitehead S.L."/>
            <person name="Wilkinson J.E."/>
            <person name="Willey D.L."/>
            <person name="Williams H."/>
            <person name="Wilming L."/>
            <person name="Wray P.W."/>
            <person name="Wu Z."/>
            <person name="Coulson A."/>
            <person name="Vaudin M."/>
            <person name="Sulston J.E."/>
            <person name="Durbin R.M."/>
            <person name="Hubbard T."/>
            <person name="Wooster R."/>
            <person name="Dunham I."/>
            <person name="Carter N.P."/>
            <person name="McVean G."/>
            <person name="Ross M.T."/>
            <person name="Harrow J."/>
            <person name="Olson M.V."/>
            <person name="Beck S."/>
            <person name="Rogers J."/>
            <person name="Bentley D.R."/>
        </authorList>
    </citation>
    <scope>NUCLEOTIDE SEQUENCE [LARGE SCALE GENOMIC DNA]</scope>
</reference>
<reference key="2">
    <citation type="submission" date="1999-02" db="EMBL/GenBank/DDBJ databases">
        <authorList>
            <person name="Mei G."/>
            <person name="Yu W."/>
            <person name="Gibbs R.A."/>
        </authorList>
    </citation>
    <scope>NUCLEOTIDE SEQUENCE [LARGE SCALE MRNA] OF 655-979</scope>
    <source>
        <tissue>Brain</tissue>
    </source>
</reference>
<reference key="3">
    <citation type="journal article" date="2017" name="Cancer Sci.">
        <title>Exome sequencing deciphers a germline MET mutation in familial epidermal growth factor receptor-mutant lung cancer.</title>
        <authorList>
            <person name="Tode N."/>
            <person name="Kikuchi T."/>
            <person name="Sakakibara T."/>
            <person name="Hirano T."/>
            <person name="Inoue A."/>
            <person name="Ohkouchi S."/>
            <person name="Tamada T."/>
            <person name="Okazaki T."/>
            <person name="Koarai A."/>
            <person name="Sugiura H."/>
            <person name="Niihori T."/>
            <person name="Aoki Y."/>
            <person name="Nakayama K."/>
            <person name="Matsumoto K."/>
            <person name="Matsubara Y."/>
            <person name="Yamamoto M."/>
            <person name="Watanabe A."/>
            <person name="Nukiwa T."/>
            <person name="Ichinose M."/>
        </authorList>
    </citation>
    <scope>VARIANT PRO-763</scope>
</reference>
<keyword id="KW-1003">Cell membrane</keyword>
<keyword id="KW-0472">Membrane</keyword>
<keyword id="KW-0597">Phosphoprotein</keyword>
<keyword id="KW-1267">Proteomics identification</keyword>
<keyword id="KW-1185">Reference proteome</keyword>
<keyword id="KW-0770">Synapse</keyword>
<gene>
    <name type="primary">DLGAP3</name>
    <name type="synonym">DAP3</name>
</gene>
<comment type="function">
    <text>May play a role in the molecular organization of synapses and neuronal cell signaling. Could be an adapter protein linking ion channel to the subsynaptic cytoskeleton. May induce enrichment of PSD-95/SAP90 at the plasma membrane.</text>
</comment>
<comment type="subunit">
    <text evidence="1">Interacts with DLG4/PSD-95.</text>
</comment>
<comment type="interaction">
    <interactant intactId="EBI-1752541">
        <id>O95886</id>
    </interactant>
    <interactant intactId="EBI-80426">
        <id>Q15700</id>
        <label>DLG2</label>
    </interactant>
    <organismsDiffer>false</organismsDiffer>
    <experiments>3</experiments>
</comment>
<comment type="interaction">
    <interactant intactId="EBI-1752541">
        <id>O95886</id>
    </interactant>
    <interactant intactId="EBI-618309">
        <id>Q08379</id>
        <label>GOLGA2</label>
    </interactant>
    <organismsDiffer>false</organismsDiffer>
    <experiments>3</experiments>
</comment>
<comment type="interaction">
    <interactant intactId="EBI-1752541">
        <id>O95886</id>
    </interactant>
    <interactant intactId="EBI-2556193">
        <id>Q63ZY3</id>
        <label>KANK2</label>
    </interactant>
    <organismsDiffer>false</organismsDiffer>
    <experiments>3</experiments>
</comment>
<comment type="interaction">
    <interactant intactId="EBI-1752541">
        <id>O95886</id>
    </interactant>
    <interactant intactId="EBI-11749135">
        <id>Q8IUG1</id>
        <label>KRTAP1-3</label>
    </interactant>
    <organismsDiffer>false</organismsDiffer>
    <experiments>3</experiments>
</comment>
<comment type="interaction">
    <interactant intactId="EBI-1752541">
        <id>O95886</id>
    </interactant>
    <interactant intactId="EBI-11958178">
        <id>Q701N4</id>
        <label>KRTAP5-2</label>
    </interactant>
    <organismsDiffer>false</organismsDiffer>
    <experiments>3</experiments>
</comment>
<comment type="interaction">
    <interactant intactId="EBI-1752541">
        <id>O95886</id>
    </interactant>
    <interactant intactId="EBI-1045155">
        <id>P43360</id>
        <label>MAGEA6</label>
    </interactant>
    <organismsDiffer>false</organismsDiffer>
    <experiments>3</experiments>
</comment>
<comment type="interaction">
    <interactant intactId="EBI-1752541">
        <id>O95886</id>
    </interactant>
    <interactant intactId="EBI-12081182">
        <id>Q86UL8-2</id>
        <label>MAGI2</label>
    </interactant>
    <organismsDiffer>false</organismsDiffer>
    <experiments>3</experiments>
</comment>
<comment type="interaction">
    <interactant intactId="EBI-1752541">
        <id>O95886</id>
    </interactant>
    <interactant intactId="EBI-389883">
        <id>P16333</id>
        <label>NCK1</label>
    </interactant>
    <organismsDiffer>false</organismsDiffer>
    <experiments>2</experiments>
</comment>
<comment type="subcellular location">
    <subcellularLocation>
        <location evidence="1">Cell membrane</location>
        <topology evidence="1">Peripheral membrane protein</topology>
    </subcellularLocation>
    <subcellularLocation>
        <location evidence="1">Postsynaptic density</location>
    </subcellularLocation>
    <subcellularLocation>
        <location evidence="1">Synapse</location>
    </subcellularLocation>
    <text evidence="1">Postsynaptic density of neuronal cells.</text>
</comment>
<comment type="similarity">
    <text evidence="6">Belongs to the SAPAP family.</text>
</comment>
<comment type="sequence caution" evidence="6">
    <conflict type="frameshift">
        <sequence resource="EMBL-CDS" id="AAD20042"/>
    </conflict>
</comment>
<proteinExistence type="evidence at protein level"/>
<organism>
    <name type="scientific">Homo sapiens</name>
    <name type="common">Human</name>
    <dbReference type="NCBI Taxonomy" id="9606"/>
    <lineage>
        <taxon>Eukaryota</taxon>
        <taxon>Metazoa</taxon>
        <taxon>Chordata</taxon>
        <taxon>Craniata</taxon>
        <taxon>Vertebrata</taxon>
        <taxon>Euteleostomi</taxon>
        <taxon>Mammalia</taxon>
        <taxon>Eutheria</taxon>
        <taxon>Euarchontoglires</taxon>
        <taxon>Primates</taxon>
        <taxon>Haplorrhini</taxon>
        <taxon>Catarrhini</taxon>
        <taxon>Hominidae</taxon>
        <taxon>Homo</taxon>
    </lineage>
</organism>
<feature type="chain" id="PRO_0000174294" description="Disks large-associated protein 3">
    <location>
        <begin position="1"/>
        <end position="979"/>
    </location>
</feature>
<feature type="region of interest" description="Disordered" evidence="4">
    <location>
        <begin position="1"/>
        <end position="20"/>
    </location>
</feature>
<feature type="region of interest" description="Disordered" evidence="4">
    <location>
        <begin position="52"/>
        <end position="95"/>
    </location>
</feature>
<feature type="region of interest" description="Disordered" evidence="4">
    <location>
        <begin position="136"/>
        <end position="169"/>
    </location>
</feature>
<feature type="region of interest" description="Disordered" evidence="4">
    <location>
        <begin position="182"/>
        <end position="291"/>
    </location>
</feature>
<feature type="region of interest" description="Disordered" evidence="4">
    <location>
        <begin position="400"/>
        <end position="429"/>
    </location>
</feature>
<feature type="region of interest" description="Disordered" evidence="4">
    <location>
        <begin position="537"/>
        <end position="581"/>
    </location>
</feature>
<feature type="region of interest" description="Disordered" evidence="4">
    <location>
        <begin position="741"/>
        <end position="790"/>
    </location>
</feature>
<feature type="region of interest" description="Disordered" evidence="4">
    <location>
        <begin position="908"/>
        <end position="940"/>
    </location>
</feature>
<feature type="compositionally biased region" description="Basic and acidic residues" evidence="4">
    <location>
        <begin position="1"/>
        <end position="10"/>
    </location>
</feature>
<feature type="compositionally biased region" description="Gly residues" evidence="4">
    <location>
        <begin position="73"/>
        <end position="86"/>
    </location>
</feature>
<feature type="compositionally biased region" description="Basic and acidic residues" evidence="4">
    <location>
        <begin position="190"/>
        <end position="202"/>
    </location>
</feature>
<feature type="compositionally biased region" description="Gly residues" evidence="4">
    <location>
        <begin position="203"/>
        <end position="218"/>
    </location>
</feature>
<feature type="compositionally biased region" description="Basic residues" evidence="4">
    <location>
        <begin position="221"/>
        <end position="246"/>
    </location>
</feature>
<feature type="compositionally biased region" description="Pro residues" evidence="4">
    <location>
        <begin position="540"/>
        <end position="549"/>
    </location>
</feature>
<feature type="compositionally biased region" description="Basic and acidic residues" evidence="4">
    <location>
        <begin position="769"/>
        <end position="779"/>
    </location>
</feature>
<feature type="compositionally biased region" description="Basic and acidic residues" evidence="4">
    <location>
        <begin position="927"/>
        <end position="940"/>
    </location>
</feature>
<feature type="modified residue" description="Phosphoserine" evidence="3">
    <location>
        <position position="58"/>
    </location>
</feature>
<feature type="modified residue" description="Phosphoserine" evidence="3">
    <location>
        <position position="406"/>
    </location>
</feature>
<feature type="modified residue" description="Phosphoserine" evidence="3">
    <location>
        <position position="409"/>
    </location>
</feature>
<feature type="modified residue" description="Phosphoserine" evidence="3">
    <location>
        <position position="412"/>
    </location>
</feature>
<feature type="modified residue" description="Phosphoserine" evidence="3">
    <location>
        <position position="416"/>
    </location>
</feature>
<feature type="modified residue" description="Phosphoserine" evidence="3">
    <location>
        <position position="643"/>
    </location>
</feature>
<feature type="modified residue" description="Phosphoserine" evidence="3">
    <location>
        <position position="645"/>
    </location>
</feature>
<feature type="modified residue" description="Phosphoserine" evidence="2">
    <location>
        <position position="932"/>
    </location>
</feature>
<feature type="modified residue" description="Phosphoserine" evidence="2">
    <location>
        <position position="935"/>
    </location>
</feature>
<feature type="modified residue" description="Phosphoserine" evidence="3">
    <location>
        <position position="967"/>
    </location>
</feature>
<feature type="sequence variant" id="VAR_079371" description="In dbSNP:rs758215471." evidence="5">
    <original>T</original>
    <variation>P</variation>
    <location>
        <position position="763"/>
    </location>
</feature>
<protein>
    <recommendedName>
        <fullName>Disks large-associated protein 3</fullName>
        <shortName>DAP-3</shortName>
    </recommendedName>
    <alternativeName>
        <fullName>PSD-95/SAP90-binding protein 3</fullName>
    </alternativeName>
    <alternativeName>
        <fullName>SAP90/PSD-95-associated protein 3</fullName>
        <shortName>SAPAP3</shortName>
    </alternativeName>
</protein>
<name>DLGP3_HUMAN</name>